<protein>
    <recommendedName>
        <fullName evidence="1">DNA-directed RNA polymerase subunit beta</fullName>
        <shortName evidence="1">RNAP subunit beta</shortName>
        <ecNumber evidence="1">2.7.7.6</ecNumber>
    </recommendedName>
    <alternativeName>
        <fullName evidence="1">RNA polymerase subunit beta</fullName>
    </alternativeName>
    <alternativeName>
        <fullName evidence="1">Transcriptase subunit beta</fullName>
    </alternativeName>
</protein>
<dbReference type="EC" id="2.7.7.6" evidence="1"/>
<dbReference type="EMBL" id="AE017285">
    <property type="protein sequence ID" value="AAS97400.1"/>
    <property type="molecule type" value="Genomic_DNA"/>
</dbReference>
<dbReference type="RefSeq" id="WP_010940188.1">
    <property type="nucleotide sequence ID" value="NC_002937.3"/>
</dbReference>
<dbReference type="RefSeq" id="YP_012140.1">
    <property type="nucleotide sequence ID" value="NC_002937.3"/>
</dbReference>
<dbReference type="SMR" id="Q727C7"/>
<dbReference type="IntAct" id="Q727C7">
    <property type="interactions" value="5"/>
</dbReference>
<dbReference type="STRING" id="882.DVU_2928"/>
<dbReference type="PaxDb" id="882-DVU_2928"/>
<dbReference type="EnsemblBacteria" id="AAS97400">
    <property type="protein sequence ID" value="AAS97400"/>
    <property type="gene ID" value="DVU_2928"/>
</dbReference>
<dbReference type="KEGG" id="dvu:DVU_2928"/>
<dbReference type="PATRIC" id="fig|882.5.peg.2648"/>
<dbReference type="eggNOG" id="COG0085">
    <property type="taxonomic scope" value="Bacteria"/>
</dbReference>
<dbReference type="HOGENOM" id="CLU_000524_4_0_7"/>
<dbReference type="OrthoDB" id="9803954at2"/>
<dbReference type="PhylomeDB" id="Q727C7"/>
<dbReference type="Proteomes" id="UP000002194">
    <property type="component" value="Chromosome"/>
</dbReference>
<dbReference type="GO" id="GO:0000428">
    <property type="term" value="C:DNA-directed RNA polymerase complex"/>
    <property type="evidence" value="ECO:0007669"/>
    <property type="project" value="UniProtKB-KW"/>
</dbReference>
<dbReference type="GO" id="GO:0003677">
    <property type="term" value="F:DNA binding"/>
    <property type="evidence" value="ECO:0007669"/>
    <property type="project" value="UniProtKB-UniRule"/>
</dbReference>
<dbReference type="GO" id="GO:0003899">
    <property type="term" value="F:DNA-directed RNA polymerase activity"/>
    <property type="evidence" value="ECO:0007669"/>
    <property type="project" value="UniProtKB-UniRule"/>
</dbReference>
<dbReference type="GO" id="GO:0032549">
    <property type="term" value="F:ribonucleoside binding"/>
    <property type="evidence" value="ECO:0007669"/>
    <property type="project" value="InterPro"/>
</dbReference>
<dbReference type="GO" id="GO:0006351">
    <property type="term" value="P:DNA-templated transcription"/>
    <property type="evidence" value="ECO:0007669"/>
    <property type="project" value="UniProtKB-UniRule"/>
</dbReference>
<dbReference type="CDD" id="cd00653">
    <property type="entry name" value="RNA_pol_B_RPB2"/>
    <property type="match status" value="1"/>
</dbReference>
<dbReference type="FunFam" id="3.90.1800.10:FF:000001">
    <property type="entry name" value="DNA-directed RNA polymerase subunit beta"/>
    <property type="match status" value="1"/>
</dbReference>
<dbReference type="Gene3D" id="2.40.50.100">
    <property type="match status" value="1"/>
</dbReference>
<dbReference type="Gene3D" id="2.40.50.150">
    <property type="match status" value="1"/>
</dbReference>
<dbReference type="Gene3D" id="3.90.1100.10">
    <property type="match status" value="2"/>
</dbReference>
<dbReference type="Gene3D" id="2.40.270.10">
    <property type="entry name" value="DNA-directed RNA polymerase, subunit 2, domain 6"/>
    <property type="match status" value="2"/>
</dbReference>
<dbReference type="Gene3D" id="3.90.1800.10">
    <property type="entry name" value="RNA polymerase alpha subunit dimerisation domain"/>
    <property type="match status" value="1"/>
</dbReference>
<dbReference type="Gene3D" id="3.90.1110.10">
    <property type="entry name" value="RNA polymerase Rpb2, domain 2"/>
    <property type="match status" value="1"/>
</dbReference>
<dbReference type="HAMAP" id="MF_01321">
    <property type="entry name" value="RNApol_bact_RpoB"/>
    <property type="match status" value="1"/>
</dbReference>
<dbReference type="InterPro" id="IPR019462">
    <property type="entry name" value="DNA-dir_RNA_pol_bsu_external_1"/>
</dbReference>
<dbReference type="InterPro" id="IPR015712">
    <property type="entry name" value="DNA-dir_RNA_pol_su2"/>
</dbReference>
<dbReference type="InterPro" id="IPR007120">
    <property type="entry name" value="DNA-dir_RNAP_su2_dom"/>
</dbReference>
<dbReference type="InterPro" id="IPR037033">
    <property type="entry name" value="DNA-dir_RNAP_su2_hyb_sf"/>
</dbReference>
<dbReference type="InterPro" id="IPR010243">
    <property type="entry name" value="RNA_pol_bsu_bac"/>
</dbReference>
<dbReference type="InterPro" id="IPR007121">
    <property type="entry name" value="RNA_pol_bsu_CS"/>
</dbReference>
<dbReference type="InterPro" id="IPR007644">
    <property type="entry name" value="RNA_pol_bsu_protrusion"/>
</dbReference>
<dbReference type="InterPro" id="IPR007642">
    <property type="entry name" value="RNA_pol_Rpb2_2"/>
</dbReference>
<dbReference type="InterPro" id="IPR037034">
    <property type="entry name" value="RNA_pol_Rpb2_2_sf"/>
</dbReference>
<dbReference type="InterPro" id="IPR007645">
    <property type="entry name" value="RNA_pol_Rpb2_3"/>
</dbReference>
<dbReference type="InterPro" id="IPR007641">
    <property type="entry name" value="RNA_pol_Rpb2_7"/>
</dbReference>
<dbReference type="InterPro" id="IPR014724">
    <property type="entry name" value="RNA_pol_RPB2_OB-fold"/>
</dbReference>
<dbReference type="NCBIfam" id="NF001616">
    <property type="entry name" value="PRK00405.1"/>
    <property type="match status" value="1"/>
</dbReference>
<dbReference type="NCBIfam" id="TIGR02013">
    <property type="entry name" value="rpoB"/>
    <property type="match status" value="1"/>
</dbReference>
<dbReference type="PANTHER" id="PTHR20856">
    <property type="entry name" value="DNA-DIRECTED RNA POLYMERASE I SUBUNIT 2"/>
    <property type="match status" value="1"/>
</dbReference>
<dbReference type="Pfam" id="PF04563">
    <property type="entry name" value="RNA_pol_Rpb2_1"/>
    <property type="match status" value="1"/>
</dbReference>
<dbReference type="Pfam" id="PF04561">
    <property type="entry name" value="RNA_pol_Rpb2_2"/>
    <property type="match status" value="2"/>
</dbReference>
<dbReference type="Pfam" id="PF04565">
    <property type="entry name" value="RNA_pol_Rpb2_3"/>
    <property type="match status" value="1"/>
</dbReference>
<dbReference type="Pfam" id="PF10385">
    <property type="entry name" value="RNA_pol_Rpb2_45"/>
    <property type="match status" value="1"/>
</dbReference>
<dbReference type="Pfam" id="PF00562">
    <property type="entry name" value="RNA_pol_Rpb2_6"/>
    <property type="match status" value="1"/>
</dbReference>
<dbReference type="Pfam" id="PF04560">
    <property type="entry name" value="RNA_pol_Rpb2_7"/>
    <property type="match status" value="1"/>
</dbReference>
<dbReference type="SUPFAM" id="SSF64484">
    <property type="entry name" value="beta and beta-prime subunits of DNA dependent RNA-polymerase"/>
    <property type="match status" value="1"/>
</dbReference>
<dbReference type="PROSITE" id="PS01166">
    <property type="entry name" value="RNA_POL_BETA"/>
    <property type="match status" value="1"/>
</dbReference>
<proteinExistence type="evidence at protein level"/>
<reference key="1">
    <citation type="journal article" date="2004" name="Nat. Biotechnol.">
        <title>The genome sequence of the anaerobic, sulfate-reducing bacterium Desulfovibrio vulgaris Hildenborough.</title>
        <authorList>
            <person name="Heidelberg J.F."/>
            <person name="Seshadri R."/>
            <person name="Haveman S.A."/>
            <person name="Hemme C.L."/>
            <person name="Paulsen I.T."/>
            <person name="Kolonay J.F."/>
            <person name="Eisen J.A."/>
            <person name="Ward N.L."/>
            <person name="Methe B.A."/>
            <person name="Brinkac L.M."/>
            <person name="Daugherty S.C."/>
            <person name="DeBoy R.T."/>
            <person name="Dodson R.J."/>
            <person name="Durkin A.S."/>
            <person name="Madupu R."/>
            <person name="Nelson W.C."/>
            <person name="Sullivan S.A."/>
            <person name="Fouts D.E."/>
            <person name="Haft D.H."/>
            <person name="Selengut J."/>
            <person name="Peterson J.D."/>
            <person name="Davidsen T.M."/>
            <person name="Zafar N."/>
            <person name="Zhou L."/>
            <person name="Radune D."/>
            <person name="Dimitrov G."/>
            <person name="Hance M."/>
            <person name="Tran K."/>
            <person name="Khouri H.M."/>
            <person name="Gill J."/>
            <person name="Utterback T.R."/>
            <person name="Feldblyum T.V."/>
            <person name="Wall J.D."/>
            <person name="Voordouw G."/>
            <person name="Fraser C.M."/>
        </authorList>
    </citation>
    <scope>NUCLEOTIDE SEQUENCE [LARGE SCALE GENOMIC DNA]</scope>
    <source>
        <strain>ATCC 29579 / DSM 644 / CCUG 34227 / NCIMB 8303 / VKM B-1760 / Hildenborough</strain>
    </source>
</reference>
<comment type="function">
    <text evidence="1">DNA-dependent RNA polymerase catalyzes the transcription of DNA into RNA using the four ribonucleoside triphosphates as substrates.</text>
</comment>
<comment type="catalytic activity">
    <reaction evidence="1">
        <text>RNA(n) + a ribonucleoside 5'-triphosphate = RNA(n+1) + diphosphate</text>
        <dbReference type="Rhea" id="RHEA:21248"/>
        <dbReference type="Rhea" id="RHEA-COMP:14527"/>
        <dbReference type="Rhea" id="RHEA-COMP:17342"/>
        <dbReference type="ChEBI" id="CHEBI:33019"/>
        <dbReference type="ChEBI" id="CHEBI:61557"/>
        <dbReference type="ChEBI" id="CHEBI:140395"/>
        <dbReference type="EC" id="2.7.7.6"/>
    </reaction>
</comment>
<comment type="subunit">
    <text evidence="1">The RNAP catalytic core consists of 2 alpha, 1 beta, 1 beta' and 1 omega subunit. When a sigma factor is associated with the core the holoenzyme is formed, which can initiate transcription.</text>
</comment>
<comment type="interaction">
    <interactant intactId="EBI-10066295">
        <id>Q727C7</id>
    </interactant>
    <interactant intactId="EBI-10066307">
        <id>Q72CF4</id>
        <label>rpoA</label>
    </interactant>
    <organismsDiffer>false</organismsDiffer>
    <experiments>3</experiments>
</comment>
<comment type="interaction">
    <interactant intactId="EBI-10066295">
        <id>Q727C7</id>
    </interactant>
    <interactant intactId="EBI-10065699">
        <id>Q727C6</id>
        <label>rpoC</label>
    </interactant>
    <organismsDiffer>false</organismsDiffer>
    <experiments>4</experiments>
</comment>
<comment type="similarity">
    <text evidence="1">Belongs to the RNA polymerase beta chain family.</text>
</comment>
<name>RPOB_NITV2</name>
<accession>Q727C7</accession>
<keyword id="KW-0240">DNA-directed RNA polymerase</keyword>
<keyword id="KW-0548">Nucleotidyltransferase</keyword>
<keyword id="KW-1185">Reference proteome</keyword>
<keyword id="KW-0804">Transcription</keyword>
<keyword id="KW-0808">Transferase</keyword>
<feature type="chain" id="PRO_0000224053" description="DNA-directed RNA polymerase subunit beta">
    <location>
        <begin position="1"/>
        <end position="1372"/>
    </location>
</feature>
<organism>
    <name type="scientific">Nitratidesulfovibrio vulgaris (strain ATCC 29579 / DSM 644 / CCUG 34227 / NCIMB 8303 / VKM B-1760 / Hildenborough)</name>
    <name type="common">Desulfovibrio vulgaris</name>
    <dbReference type="NCBI Taxonomy" id="882"/>
    <lineage>
        <taxon>Bacteria</taxon>
        <taxon>Pseudomonadati</taxon>
        <taxon>Thermodesulfobacteriota</taxon>
        <taxon>Desulfovibrionia</taxon>
        <taxon>Desulfovibrionales</taxon>
        <taxon>Desulfovibrionaceae</taxon>
        <taxon>Nitratidesulfovibrio</taxon>
    </lineage>
</organism>
<evidence type="ECO:0000255" key="1">
    <source>
        <dbReference type="HAMAP-Rule" id="MF_01321"/>
    </source>
</evidence>
<gene>
    <name evidence="1" type="primary">rpoB</name>
    <name type="ordered locus">DVU_2928</name>
</gene>
<sequence length="1372" mass="153214">MGQLTKKFGKIDVSLPIPHLLNLQVDSYVKFLQEGATERRHDEGLEGVFRSVFPIEDFNRTASLEFVSYEVGEPKYDQPECISKGLTYEAPIRIKVRLVVYDVDEDSGNRTIRDIKEQEIYFGTLPLMTEKGTFIINGTERVIVNQLQRSPGIIFEHDSGKTHSSRKVLYSCRIIPMRGSWLDFDFDHKDILYVRIDRRRKMPATILFKAMGMSKTDILDYFYKKEFYRLDPMGRLMWEVQKDMYRKDSAFVDIEDGKGGTIVKAGKPITKRAWRLISEAGLETIEVAPDTIEGMFLAEDIVNPATGEVLAEAADEITASLVENLREAGISRLPVLHTKGLETSSSLRDTLVLDKTPDMEAAQVEIYRRLRPSSPPTPEIAASFFDNLFRSADYYDLSPVGRYKLNQRLGIDQSVDLRTLTDDDILRAIRVLLHLKDSHGPADDIDHLGNRRVRPVGELVENQYRIGLVRMERAIKERMSLQEVSTLMPHDLINPKPVAAVLKEFFGTSQLSQFMDQTNALSEVTHKRRLSALGPGGLTRERAGFEVRDVHTSHYGRICPIETPEGPNIGLIVSLTTYAKVNDFGFIETPYRIIREGALTDEIKFLDASREQGEVVAQANAAVDADGKLADEYVTARVRGDVLMSHRDEVTLMDISPSQMVSISAALIPFLEHDDANRALMGSNMQRQAVPLLRSEKPIVGTGMEGDVARDSGACILAEGPGIVRYADATRIIVSYENGLYPDRGGVRAYDLQKYHKSNQNSCFGQRPTCHPGQIVKKGDVLADGPGIEDGELALGKNLVVAFMPWCGYNFEDSILISERVVKEDVFTSIHIEEFEVVARDTKLGPEEITRDIPNVGEDMLRNLDGSGIIRIGASVKPDDILVGKITPKGETQLTPEEKLLRAIFGDKARDVKNTSLKVPPGIEGTIIDVKVFNRRSGEKDERTRNIEDYETARIDKKEQDHVRALGDALRDRLADTLVGKQIAVTLPGKRKGEVLAEAGAPMTRELLDALPVKRLAGLFKSREVDEMVDTALEDYDRQVAFLKGIYDSKREKVTEGDDLPPGVIKMVKVHIAVKRKLNVGDKMAGRHGNKGVVSCILPEEDMPFFADGRPVDIVLNPLGVPSRMNIGQIMETHLGWGAKELGRQLAEMLDSGAAMATLRHEVKDVFRSATIAKLVDEMDDETFRKAVSKLRTGIVTKTPVFDGASEEDIWSWIERAGMDGDGKTVLYDGRTGDKFYNRVTTGVMYILKLHHLVDEKIHARSTGPYSLVTQQPLGGKAQFGGQRLGEMEVWALEAYGASYLLQEFLTVKSDDVTGRVKMYEKIVKGDNFLEAGLPESFNVLVKELMSLGLNVTLHQEEGKKRPKRVGFMSAL</sequence>